<sequence length="616" mass="70367">MRFAKALAITAVLLSGVVEATSDAVIEEALKAPTINPLPGPVTWYLHADEGRKYLAPFVSYHGPHKSGIRDAWERCYSTIRRLKWYPQALEGPIPKFDPFPDQSSKPKEKRQNAPPGAMIRRVRVKVKDVDAKLAHKVDESYSLTVSAKSEAIEIEAQTPWGARHAFTTLQQIVVYDEKSQRFYIERPFTISEGPLYPIRGILLDSGRNFISPSKIKEQLDAMALSKLNVLHWHITDTQSWPLQVNTYPQMTEDAYSKRMVYSHATIKEIIEYARQRGIRVIPEIDTPSHSSSGWKRIDPDLVACGNSWWSNDFFPHHTALEPNPGQLDIAYNKTYEVLENLYKEVSSLFEDEFHHLGGDELQPNCYKFSKHVTKWLAEHPDMTLNDLLQEYVDRTLPALDKIKHRRFIYWEDMLLSEQIHAERIPRNVVLQTWNGGLDNIKKLTSNGYDVIVSSADFFYLDCGNGGWVSNDPRYNVMRNPTPGTPNFNYGGDGGSWCAPYKTWQRIYDYDFASELTGPEKEHILGGIAPLWSEQIDDANITPKFWPRAAALAELLWSGNRDKEGKKRTYLMTARINNFREYLTANGIGAAPLQPRYCLKHPHHCDLYSDPNAVLG</sequence>
<organism>
    <name type="scientific">Arthroderma benhamiae (strain ATCC MYA-4681 / CBS 112371)</name>
    <name type="common">Trichophyton mentagrophytes</name>
    <dbReference type="NCBI Taxonomy" id="663331"/>
    <lineage>
        <taxon>Eukaryota</taxon>
        <taxon>Fungi</taxon>
        <taxon>Dikarya</taxon>
        <taxon>Ascomycota</taxon>
        <taxon>Pezizomycotina</taxon>
        <taxon>Eurotiomycetes</taxon>
        <taxon>Eurotiomycetidae</taxon>
        <taxon>Onygenales</taxon>
        <taxon>Arthrodermataceae</taxon>
        <taxon>Trichophyton</taxon>
    </lineage>
</organism>
<name>HEX2_ARTBC</name>
<comment type="function">
    <text evidence="1">Beta-hexosaminidase that shows a broad substrate specificity.</text>
</comment>
<comment type="catalytic activity">
    <reaction evidence="1">
        <text>Hydrolysis of terminal non-reducing N-acetyl-D-hexosamine residues in N-acetyl-beta-D-hexosaminides.</text>
        <dbReference type="EC" id="3.2.1.52"/>
    </reaction>
</comment>
<comment type="subcellular location">
    <subcellularLocation>
        <location evidence="7">Secreted</location>
    </subcellularLocation>
</comment>
<comment type="induction">
    <text evidence="6">Expression is down-regulated in presence of human keratinocytes.</text>
</comment>
<comment type="allergen">
    <text evidence="8">May cause an allergic reaction in human.</text>
</comment>
<comment type="similarity">
    <text evidence="8">Belongs to the glycosyl hydrolase 20 family.</text>
</comment>
<keyword id="KW-0020">Allergen</keyword>
<keyword id="KW-0325">Glycoprotein</keyword>
<keyword id="KW-0326">Glycosidase</keyword>
<keyword id="KW-0378">Hydrolase</keyword>
<keyword id="KW-1185">Reference proteome</keyword>
<keyword id="KW-0964">Secreted</keyword>
<keyword id="KW-0732">Signal</keyword>
<reference key="1">
    <citation type="journal article" date="2011" name="Genome Biol.">
        <title>Comparative and functional genomics provide insights into the pathogenicity of dermatophytic fungi.</title>
        <authorList>
            <person name="Burmester A."/>
            <person name="Shelest E."/>
            <person name="Gloeckner G."/>
            <person name="Heddergott C."/>
            <person name="Schindler S."/>
            <person name="Staib P."/>
            <person name="Heidel A."/>
            <person name="Felder M."/>
            <person name="Petzold A."/>
            <person name="Szafranski K."/>
            <person name="Feuermann M."/>
            <person name="Pedruzzi I."/>
            <person name="Priebe S."/>
            <person name="Groth M."/>
            <person name="Winkler R."/>
            <person name="Li W."/>
            <person name="Kniemeyer O."/>
            <person name="Schroeckh V."/>
            <person name="Hertweck C."/>
            <person name="Hube B."/>
            <person name="White T.C."/>
            <person name="Platzer M."/>
            <person name="Guthke R."/>
            <person name="Heitman J."/>
            <person name="Woestemeyer J."/>
            <person name="Zipfel P.F."/>
            <person name="Monod M."/>
            <person name="Brakhage A.A."/>
        </authorList>
    </citation>
    <scope>NUCLEOTIDE SEQUENCE [LARGE SCALE GENOMIC DNA]</scope>
    <scope>INDUCTION</scope>
    <source>
        <strain>ATCC MYA-4681 / CBS 112371</strain>
    </source>
</reference>
<reference key="2">
    <citation type="journal article" date="2011" name="Proteomics">
        <title>Identification of novel secreted proteases during extracellular proteolysis by dermatophytes at acidic pH.</title>
        <authorList>
            <person name="Sriranganadane D."/>
            <person name="Waridel P."/>
            <person name="Salamin K."/>
            <person name="Feuermann M."/>
            <person name="Mignon B."/>
            <person name="Staib P."/>
            <person name="Neuhaus J.M."/>
            <person name="Quadroni M."/>
            <person name="Monod M."/>
        </authorList>
    </citation>
    <scope>IDENTIFICATION BY MASS SPECTROMETRY</scope>
    <scope>SUBCELLULAR LOCATION</scope>
</reference>
<proteinExistence type="evidence at protein level"/>
<feature type="signal peptide" evidence="2">
    <location>
        <begin position="1"/>
        <end position="20"/>
    </location>
</feature>
<feature type="chain" id="PRO_5003054355" description="Probable beta-hexosaminidase ARB_01353">
    <location>
        <begin position="21"/>
        <end position="616"/>
    </location>
</feature>
<feature type="region of interest" description="Disordered" evidence="5">
    <location>
        <begin position="96"/>
        <end position="117"/>
    </location>
</feature>
<feature type="active site" description="Proton donor" evidence="3">
    <location>
        <position position="361"/>
    </location>
</feature>
<feature type="glycosylation site" description="N-linked (GlcNAc...) asparagine" evidence="4">
    <location>
        <position position="333"/>
    </location>
</feature>
<gene>
    <name type="ORF">ARB_01353</name>
</gene>
<protein>
    <recommendedName>
        <fullName evidence="8">Probable beta-hexosaminidase ARB_01353</fullName>
        <ecNumber evidence="1">3.2.1.52</ecNumber>
    </recommendedName>
    <alternativeName>
        <fullName evidence="8">Allergen Pen c 20 homolog</fullName>
    </alternativeName>
    <alternativeName>
        <fullName evidence="1">Beta-GlcNAcase</fullName>
    </alternativeName>
    <alternativeName>
        <fullName evidence="1">Beta-N-acetylhexosaminidase</fullName>
    </alternativeName>
    <alternativeName>
        <fullName evidence="1">N-acetyl-beta-glucosaminidase</fullName>
    </alternativeName>
</protein>
<accession>D4AYT4</accession>
<dbReference type="EC" id="3.2.1.52" evidence="1"/>
<dbReference type="EMBL" id="ABSU01000019">
    <property type="protein sequence ID" value="EFE31754.1"/>
    <property type="molecule type" value="Genomic_DNA"/>
</dbReference>
<dbReference type="RefSeq" id="XP_003012394.1">
    <property type="nucleotide sequence ID" value="XM_003012348.1"/>
</dbReference>
<dbReference type="SMR" id="D4AYT4"/>
<dbReference type="STRING" id="663331.D4AYT4"/>
<dbReference type="GeneID" id="9520043"/>
<dbReference type="KEGG" id="abe:ARB_01353"/>
<dbReference type="eggNOG" id="KOG2499">
    <property type="taxonomic scope" value="Eukaryota"/>
</dbReference>
<dbReference type="HOGENOM" id="CLU_007082_0_2_1"/>
<dbReference type="OMA" id="KMWPRAA"/>
<dbReference type="OrthoDB" id="428480at2759"/>
<dbReference type="Proteomes" id="UP000008866">
    <property type="component" value="Unassembled WGS sequence"/>
</dbReference>
<dbReference type="GO" id="GO:0005576">
    <property type="term" value="C:extracellular region"/>
    <property type="evidence" value="ECO:0007669"/>
    <property type="project" value="UniProtKB-SubCell"/>
</dbReference>
<dbReference type="GO" id="GO:0016020">
    <property type="term" value="C:membrane"/>
    <property type="evidence" value="ECO:0007669"/>
    <property type="project" value="TreeGrafter"/>
</dbReference>
<dbReference type="GO" id="GO:0016231">
    <property type="term" value="F:beta-N-acetylglucosaminidase activity"/>
    <property type="evidence" value="ECO:0007669"/>
    <property type="project" value="TreeGrafter"/>
</dbReference>
<dbReference type="GO" id="GO:0005975">
    <property type="term" value="P:carbohydrate metabolic process"/>
    <property type="evidence" value="ECO:0007669"/>
    <property type="project" value="InterPro"/>
</dbReference>
<dbReference type="GO" id="GO:0030203">
    <property type="term" value="P:glycosaminoglycan metabolic process"/>
    <property type="evidence" value="ECO:0007669"/>
    <property type="project" value="TreeGrafter"/>
</dbReference>
<dbReference type="CDD" id="cd06562">
    <property type="entry name" value="GH20_HexA_HexB-like"/>
    <property type="match status" value="1"/>
</dbReference>
<dbReference type="FunFam" id="3.20.20.80:FF:000063">
    <property type="entry name" value="Beta-hexosaminidase"/>
    <property type="match status" value="1"/>
</dbReference>
<dbReference type="Gene3D" id="3.30.379.10">
    <property type="entry name" value="Chitobiase/beta-hexosaminidase domain 2-like"/>
    <property type="match status" value="1"/>
</dbReference>
<dbReference type="Gene3D" id="3.20.20.80">
    <property type="entry name" value="Glycosidases"/>
    <property type="match status" value="1"/>
</dbReference>
<dbReference type="InterPro" id="IPR025705">
    <property type="entry name" value="Beta_hexosaminidase_sua/sub"/>
</dbReference>
<dbReference type="InterPro" id="IPR015883">
    <property type="entry name" value="Glyco_hydro_20_cat"/>
</dbReference>
<dbReference type="InterPro" id="IPR017853">
    <property type="entry name" value="Glycoside_hydrolase_SF"/>
</dbReference>
<dbReference type="InterPro" id="IPR029018">
    <property type="entry name" value="Hex-like_dom2"/>
</dbReference>
<dbReference type="InterPro" id="IPR029019">
    <property type="entry name" value="HEX_eukaryotic_N"/>
</dbReference>
<dbReference type="PANTHER" id="PTHR22600">
    <property type="entry name" value="BETA-HEXOSAMINIDASE"/>
    <property type="match status" value="1"/>
</dbReference>
<dbReference type="PANTHER" id="PTHR22600:SF26">
    <property type="entry name" value="BETA-N-ACETYLHEXOSAMINIDASE"/>
    <property type="match status" value="1"/>
</dbReference>
<dbReference type="Pfam" id="PF00728">
    <property type="entry name" value="Glyco_hydro_20"/>
    <property type="match status" value="1"/>
</dbReference>
<dbReference type="Pfam" id="PF14845">
    <property type="entry name" value="Glycohydro_20b2"/>
    <property type="match status" value="1"/>
</dbReference>
<dbReference type="PIRSF" id="PIRSF001093">
    <property type="entry name" value="B-hxosamndse_ab_euk"/>
    <property type="match status" value="1"/>
</dbReference>
<dbReference type="PRINTS" id="PR00738">
    <property type="entry name" value="GLHYDRLASE20"/>
</dbReference>
<dbReference type="SUPFAM" id="SSF51445">
    <property type="entry name" value="(Trans)glycosidases"/>
    <property type="match status" value="1"/>
</dbReference>
<dbReference type="SUPFAM" id="SSF55545">
    <property type="entry name" value="beta-N-acetylhexosaminidase-like domain"/>
    <property type="match status" value="1"/>
</dbReference>
<evidence type="ECO:0000250" key="1">
    <source>
        <dbReference type="UniProtKB" id="E9DFH0"/>
    </source>
</evidence>
<evidence type="ECO:0000255" key="2"/>
<evidence type="ECO:0000255" key="3">
    <source>
        <dbReference type="PIRSR" id="PIRSR001093-1"/>
    </source>
</evidence>
<evidence type="ECO:0000255" key="4">
    <source>
        <dbReference type="PROSITE-ProRule" id="PRU00498"/>
    </source>
</evidence>
<evidence type="ECO:0000256" key="5">
    <source>
        <dbReference type="SAM" id="MobiDB-lite"/>
    </source>
</evidence>
<evidence type="ECO:0000269" key="6">
    <source>
    </source>
</evidence>
<evidence type="ECO:0000269" key="7">
    <source>
    </source>
</evidence>
<evidence type="ECO:0000305" key="8"/>